<organism>
    <name type="scientific">Salmonella schwarzengrund (strain CVM19633)</name>
    <dbReference type="NCBI Taxonomy" id="439843"/>
    <lineage>
        <taxon>Bacteria</taxon>
        <taxon>Pseudomonadati</taxon>
        <taxon>Pseudomonadota</taxon>
        <taxon>Gammaproteobacteria</taxon>
        <taxon>Enterobacterales</taxon>
        <taxon>Enterobacteriaceae</taxon>
        <taxon>Salmonella</taxon>
    </lineage>
</organism>
<feature type="chain" id="PRO_1000097784" description="tRNA pseudouridine synthase A">
    <location>
        <begin position="1"/>
        <end position="270"/>
    </location>
</feature>
<feature type="active site" description="Nucleophile" evidence="1">
    <location>
        <position position="60"/>
    </location>
</feature>
<feature type="binding site" evidence="1">
    <location>
        <position position="118"/>
    </location>
    <ligand>
        <name>substrate</name>
    </ligand>
</feature>
<comment type="function">
    <text evidence="1">Formation of pseudouridine at positions 38, 39 and 40 in the anticodon stem and loop of transfer RNAs.</text>
</comment>
<comment type="catalytic activity">
    <reaction evidence="1">
        <text>uridine(38/39/40) in tRNA = pseudouridine(38/39/40) in tRNA</text>
        <dbReference type="Rhea" id="RHEA:22376"/>
        <dbReference type="Rhea" id="RHEA-COMP:10085"/>
        <dbReference type="Rhea" id="RHEA-COMP:10087"/>
        <dbReference type="ChEBI" id="CHEBI:65314"/>
        <dbReference type="ChEBI" id="CHEBI:65315"/>
        <dbReference type="EC" id="5.4.99.12"/>
    </reaction>
</comment>
<comment type="subunit">
    <text evidence="1">Homodimer.</text>
</comment>
<comment type="similarity">
    <text evidence="1">Belongs to the tRNA pseudouridine synthase TruA family.</text>
</comment>
<dbReference type="EC" id="5.4.99.12" evidence="1"/>
<dbReference type="EMBL" id="CP001127">
    <property type="protein sequence ID" value="ACF89222.1"/>
    <property type="molecule type" value="Genomic_DNA"/>
</dbReference>
<dbReference type="RefSeq" id="WP_000016631.1">
    <property type="nucleotide sequence ID" value="NC_011094.1"/>
</dbReference>
<dbReference type="SMR" id="B4TQA4"/>
<dbReference type="KEGG" id="sew:SeSA_A2598"/>
<dbReference type="HOGENOM" id="CLU_014673_0_2_6"/>
<dbReference type="Proteomes" id="UP000001865">
    <property type="component" value="Chromosome"/>
</dbReference>
<dbReference type="GO" id="GO:0003723">
    <property type="term" value="F:RNA binding"/>
    <property type="evidence" value="ECO:0007669"/>
    <property type="project" value="InterPro"/>
</dbReference>
<dbReference type="GO" id="GO:0160147">
    <property type="term" value="F:tRNA pseudouridine(38-40) synthase activity"/>
    <property type="evidence" value="ECO:0007669"/>
    <property type="project" value="UniProtKB-EC"/>
</dbReference>
<dbReference type="GO" id="GO:0031119">
    <property type="term" value="P:tRNA pseudouridine synthesis"/>
    <property type="evidence" value="ECO:0007669"/>
    <property type="project" value="UniProtKB-UniRule"/>
</dbReference>
<dbReference type="CDD" id="cd02570">
    <property type="entry name" value="PseudoU_synth_EcTruA"/>
    <property type="match status" value="1"/>
</dbReference>
<dbReference type="FunFam" id="3.30.70.580:FF:000001">
    <property type="entry name" value="tRNA pseudouridine synthase A"/>
    <property type="match status" value="1"/>
</dbReference>
<dbReference type="FunFam" id="3.30.70.660:FF:000001">
    <property type="entry name" value="tRNA pseudouridine synthase A"/>
    <property type="match status" value="1"/>
</dbReference>
<dbReference type="Gene3D" id="3.30.70.660">
    <property type="entry name" value="Pseudouridine synthase I, catalytic domain, C-terminal subdomain"/>
    <property type="match status" value="1"/>
</dbReference>
<dbReference type="Gene3D" id="3.30.70.580">
    <property type="entry name" value="Pseudouridine synthase I, catalytic domain, N-terminal subdomain"/>
    <property type="match status" value="1"/>
</dbReference>
<dbReference type="HAMAP" id="MF_00171">
    <property type="entry name" value="TruA"/>
    <property type="match status" value="1"/>
</dbReference>
<dbReference type="InterPro" id="IPR020103">
    <property type="entry name" value="PsdUridine_synth_cat_dom_sf"/>
</dbReference>
<dbReference type="InterPro" id="IPR001406">
    <property type="entry name" value="PsdUridine_synth_TruA"/>
</dbReference>
<dbReference type="InterPro" id="IPR020097">
    <property type="entry name" value="PsdUridine_synth_TruA_a/b_dom"/>
</dbReference>
<dbReference type="InterPro" id="IPR020095">
    <property type="entry name" value="PsdUridine_synth_TruA_C"/>
</dbReference>
<dbReference type="InterPro" id="IPR020094">
    <property type="entry name" value="TruA/RsuA/RluB/E/F_N"/>
</dbReference>
<dbReference type="NCBIfam" id="TIGR00071">
    <property type="entry name" value="hisT_truA"/>
    <property type="match status" value="1"/>
</dbReference>
<dbReference type="PANTHER" id="PTHR11142">
    <property type="entry name" value="PSEUDOURIDYLATE SYNTHASE"/>
    <property type="match status" value="1"/>
</dbReference>
<dbReference type="PANTHER" id="PTHR11142:SF0">
    <property type="entry name" value="TRNA PSEUDOURIDINE SYNTHASE-LIKE 1"/>
    <property type="match status" value="1"/>
</dbReference>
<dbReference type="Pfam" id="PF01416">
    <property type="entry name" value="PseudoU_synth_1"/>
    <property type="match status" value="2"/>
</dbReference>
<dbReference type="PIRSF" id="PIRSF001430">
    <property type="entry name" value="tRNA_psdUrid_synth"/>
    <property type="match status" value="1"/>
</dbReference>
<dbReference type="SUPFAM" id="SSF55120">
    <property type="entry name" value="Pseudouridine synthase"/>
    <property type="match status" value="1"/>
</dbReference>
<keyword id="KW-0413">Isomerase</keyword>
<keyword id="KW-0819">tRNA processing</keyword>
<proteinExistence type="inferred from homology"/>
<sequence>MSGQQSSPVYKIALGIEYDGSKYYGWQRQNEVRSVQEKLEKALSQVANEPINVFCAGRTDAGVHGTGQVVHFETTALRKDAAWTLGVNANLPGDIAVRWVKTVPDDFHARFSATARRYRYIIYNHRLRPAVLAKGVTHYYEPLDAERMHRAAQCLLGENDFTSFRAVQCQSRTPWRNVMHINVTRHGPYVVVDIKANAFVHHMVRNIVGSLLEVGAHNQPESWIAELLAARDRTLAAATAKAEGLYLVAVDYPDRFDLPKPPMGPLFLAD</sequence>
<reference key="1">
    <citation type="journal article" date="2011" name="J. Bacteriol.">
        <title>Comparative genomics of 28 Salmonella enterica isolates: evidence for CRISPR-mediated adaptive sublineage evolution.</title>
        <authorList>
            <person name="Fricke W.F."/>
            <person name="Mammel M.K."/>
            <person name="McDermott P.F."/>
            <person name="Tartera C."/>
            <person name="White D.G."/>
            <person name="Leclerc J.E."/>
            <person name="Ravel J."/>
            <person name="Cebula T.A."/>
        </authorList>
    </citation>
    <scope>NUCLEOTIDE SEQUENCE [LARGE SCALE GENOMIC DNA]</scope>
    <source>
        <strain>CVM19633</strain>
    </source>
</reference>
<accession>B4TQA4</accession>
<gene>
    <name evidence="1" type="primary">truA</name>
    <name type="ordered locus">SeSA_A2598</name>
</gene>
<name>TRUA_SALSV</name>
<evidence type="ECO:0000255" key="1">
    <source>
        <dbReference type="HAMAP-Rule" id="MF_00171"/>
    </source>
</evidence>
<protein>
    <recommendedName>
        <fullName evidence="1">tRNA pseudouridine synthase A</fullName>
        <ecNumber evidence="1">5.4.99.12</ecNumber>
    </recommendedName>
    <alternativeName>
        <fullName evidence="1">tRNA pseudouridine(38-40) synthase</fullName>
    </alternativeName>
    <alternativeName>
        <fullName evidence="1">tRNA pseudouridylate synthase I</fullName>
    </alternativeName>
    <alternativeName>
        <fullName evidence="1">tRNA-uridine isomerase I</fullName>
    </alternativeName>
</protein>